<name>APAH_PSEF5</name>
<reference key="1">
    <citation type="journal article" date="2005" name="Nat. Biotechnol.">
        <title>Complete genome sequence of the plant commensal Pseudomonas fluorescens Pf-5.</title>
        <authorList>
            <person name="Paulsen I.T."/>
            <person name="Press C.M."/>
            <person name="Ravel J."/>
            <person name="Kobayashi D.Y."/>
            <person name="Myers G.S.A."/>
            <person name="Mavrodi D.V."/>
            <person name="DeBoy R.T."/>
            <person name="Seshadri R."/>
            <person name="Ren Q."/>
            <person name="Madupu R."/>
            <person name="Dodson R.J."/>
            <person name="Durkin A.S."/>
            <person name="Brinkac L.M."/>
            <person name="Daugherty S.C."/>
            <person name="Sullivan S.A."/>
            <person name="Rosovitz M.J."/>
            <person name="Gwinn M.L."/>
            <person name="Zhou L."/>
            <person name="Schneider D.J."/>
            <person name="Cartinhour S.W."/>
            <person name="Nelson W.C."/>
            <person name="Weidman J."/>
            <person name="Watkins K."/>
            <person name="Tran K."/>
            <person name="Khouri H."/>
            <person name="Pierson E.A."/>
            <person name="Pierson L.S. III"/>
            <person name="Thomashow L.S."/>
            <person name="Loper J.E."/>
        </authorList>
    </citation>
    <scope>NUCLEOTIDE SEQUENCE [LARGE SCALE GENOMIC DNA]</scope>
    <source>
        <strain>ATCC BAA-477 / NRRL B-23932 / Pf-5</strain>
    </source>
</reference>
<keyword id="KW-0378">Hydrolase</keyword>
<comment type="function">
    <text evidence="1">Hydrolyzes diadenosine 5',5'''-P1,P4-tetraphosphate to yield ADP.</text>
</comment>
<comment type="catalytic activity">
    <reaction evidence="1">
        <text>P(1),P(4)-bis(5'-adenosyl) tetraphosphate + H2O = 2 ADP + 2 H(+)</text>
        <dbReference type="Rhea" id="RHEA:24252"/>
        <dbReference type="ChEBI" id="CHEBI:15377"/>
        <dbReference type="ChEBI" id="CHEBI:15378"/>
        <dbReference type="ChEBI" id="CHEBI:58141"/>
        <dbReference type="ChEBI" id="CHEBI:456216"/>
        <dbReference type="EC" id="3.6.1.41"/>
    </reaction>
</comment>
<comment type="similarity">
    <text evidence="1">Belongs to the Ap4A hydrolase family.</text>
</comment>
<organism>
    <name type="scientific">Pseudomonas fluorescens (strain ATCC BAA-477 / NRRL B-23932 / Pf-5)</name>
    <dbReference type="NCBI Taxonomy" id="220664"/>
    <lineage>
        <taxon>Bacteria</taxon>
        <taxon>Pseudomonadati</taxon>
        <taxon>Pseudomonadota</taxon>
        <taxon>Gammaproteobacteria</taxon>
        <taxon>Pseudomonadales</taxon>
        <taxon>Pseudomonadaceae</taxon>
        <taxon>Pseudomonas</taxon>
    </lineage>
</organism>
<sequence length="289" mass="32526">MATYAVGDLQGCLEPLQCLLEQVAFDPARDRLWLVGDLVNRGPQSLETLRYLYSIRDSLVCVLGNHDLHLLAVWRNVERLKKSDTLREILEAPDCEELLQWLRQQKLMHYDEARNIAMVHAGIAPQWSLKKAQKCAAEVEEALRDDNLFDPFLDGMYGNDPAKWDSDLKGVTRLRVITNYFTRMRFCTSDGKLDLKSKEGLDTAPPGYAPWFSHKERKTRDLKIIFGHWAALEGHCNEPGIFALDSGCVWGGAMTLLNVDSGVRLTCDCDAQGRTAALSPDPLPAPAKR</sequence>
<gene>
    <name evidence="1" type="primary">apaH</name>
    <name type="ordered locus">PFL_5651</name>
</gene>
<dbReference type="EC" id="3.6.1.41" evidence="1"/>
<dbReference type="EMBL" id="CP000076">
    <property type="protein sequence ID" value="AAY94844.1"/>
    <property type="molecule type" value="Genomic_DNA"/>
</dbReference>
<dbReference type="RefSeq" id="WP_011063829.1">
    <property type="nucleotide sequence ID" value="NC_004129.6"/>
</dbReference>
<dbReference type="SMR" id="Q4K4X3"/>
<dbReference type="STRING" id="220664.PFL_5651"/>
<dbReference type="KEGG" id="pfl:PFL_5651"/>
<dbReference type="PATRIC" id="fig|220664.5.peg.5763"/>
<dbReference type="eggNOG" id="COG0639">
    <property type="taxonomic scope" value="Bacteria"/>
</dbReference>
<dbReference type="HOGENOM" id="CLU_056184_2_0_6"/>
<dbReference type="Proteomes" id="UP000008540">
    <property type="component" value="Chromosome"/>
</dbReference>
<dbReference type="GO" id="GO:0008803">
    <property type="term" value="F:bis(5'-nucleosyl)-tetraphosphatase (symmetrical) activity"/>
    <property type="evidence" value="ECO:0007669"/>
    <property type="project" value="UniProtKB-UniRule"/>
</dbReference>
<dbReference type="CDD" id="cd07422">
    <property type="entry name" value="MPP_ApaH"/>
    <property type="match status" value="1"/>
</dbReference>
<dbReference type="Gene3D" id="3.60.21.10">
    <property type="match status" value="1"/>
</dbReference>
<dbReference type="HAMAP" id="MF_00199">
    <property type="entry name" value="ApaH"/>
    <property type="match status" value="1"/>
</dbReference>
<dbReference type="InterPro" id="IPR004617">
    <property type="entry name" value="ApaH"/>
</dbReference>
<dbReference type="InterPro" id="IPR004843">
    <property type="entry name" value="Calcineurin-like_PHP_ApaH"/>
</dbReference>
<dbReference type="InterPro" id="IPR029052">
    <property type="entry name" value="Metallo-depent_PP-like"/>
</dbReference>
<dbReference type="NCBIfam" id="TIGR00668">
    <property type="entry name" value="apaH"/>
    <property type="match status" value="1"/>
</dbReference>
<dbReference type="NCBIfam" id="NF001204">
    <property type="entry name" value="PRK00166.1"/>
    <property type="match status" value="1"/>
</dbReference>
<dbReference type="PANTHER" id="PTHR40942">
    <property type="match status" value="1"/>
</dbReference>
<dbReference type="PANTHER" id="PTHR40942:SF4">
    <property type="entry name" value="CYTOCHROME C5"/>
    <property type="match status" value="1"/>
</dbReference>
<dbReference type="Pfam" id="PF00149">
    <property type="entry name" value="Metallophos"/>
    <property type="match status" value="1"/>
</dbReference>
<dbReference type="PIRSF" id="PIRSF000903">
    <property type="entry name" value="B5n-ttraPtase_sm"/>
    <property type="match status" value="1"/>
</dbReference>
<dbReference type="SUPFAM" id="SSF56300">
    <property type="entry name" value="Metallo-dependent phosphatases"/>
    <property type="match status" value="1"/>
</dbReference>
<feature type="chain" id="PRO_1000012078" description="Bis(5'-nucleosyl)-tetraphosphatase, symmetrical">
    <location>
        <begin position="1"/>
        <end position="289"/>
    </location>
</feature>
<evidence type="ECO:0000255" key="1">
    <source>
        <dbReference type="HAMAP-Rule" id="MF_00199"/>
    </source>
</evidence>
<proteinExistence type="inferred from homology"/>
<accession>Q4K4X3</accession>
<protein>
    <recommendedName>
        <fullName evidence="1">Bis(5'-nucleosyl)-tetraphosphatase, symmetrical</fullName>
        <ecNumber evidence="1">3.6.1.41</ecNumber>
    </recommendedName>
    <alternativeName>
        <fullName evidence="1">Ap4A hydrolase</fullName>
    </alternativeName>
    <alternativeName>
        <fullName evidence="1">Diadenosine 5',5'''-P1,P4-tetraphosphate pyrophosphohydrolase</fullName>
    </alternativeName>
    <alternativeName>
        <fullName evidence="1">Diadenosine tetraphosphatase</fullName>
    </alternativeName>
</protein>